<feature type="chain" id="PRO_0000060904" description="Cytochrome b">
    <location>
        <begin position="1"/>
        <end position="379"/>
    </location>
</feature>
<feature type="transmembrane region" description="Helical" evidence="2">
    <location>
        <begin position="33"/>
        <end position="53"/>
    </location>
</feature>
<feature type="transmembrane region" description="Helical" evidence="2">
    <location>
        <begin position="77"/>
        <end position="98"/>
    </location>
</feature>
<feature type="transmembrane region" description="Helical" evidence="2">
    <location>
        <begin position="113"/>
        <end position="133"/>
    </location>
</feature>
<feature type="transmembrane region" description="Helical" evidence="2">
    <location>
        <begin position="178"/>
        <end position="198"/>
    </location>
</feature>
<feature type="transmembrane region" description="Helical" evidence="2">
    <location>
        <begin position="226"/>
        <end position="246"/>
    </location>
</feature>
<feature type="transmembrane region" description="Helical" evidence="2">
    <location>
        <begin position="288"/>
        <end position="308"/>
    </location>
</feature>
<feature type="transmembrane region" description="Helical" evidence="2">
    <location>
        <begin position="320"/>
        <end position="340"/>
    </location>
</feature>
<feature type="transmembrane region" description="Helical" evidence="2">
    <location>
        <begin position="347"/>
        <end position="367"/>
    </location>
</feature>
<feature type="binding site" description="axial binding residue" evidence="2">
    <location>
        <position position="83"/>
    </location>
    <ligand>
        <name>heme b</name>
        <dbReference type="ChEBI" id="CHEBI:60344"/>
        <label>b562</label>
    </ligand>
    <ligandPart>
        <name>Fe</name>
        <dbReference type="ChEBI" id="CHEBI:18248"/>
    </ligandPart>
</feature>
<feature type="binding site" description="axial binding residue" evidence="2">
    <location>
        <position position="97"/>
    </location>
    <ligand>
        <name>heme b</name>
        <dbReference type="ChEBI" id="CHEBI:60344"/>
        <label>b566</label>
    </ligand>
    <ligandPart>
        <name>Fe</name>
        <dbReference type="ChEBI" id="CHEBI:18248"/>
    </ligandPart>
</feature>
<feature type="binding site" description="axial binding residue" evidence="2">
    <location>
        <position position="182"/>
    </location>
    <ligand>
        <name>heme b</name>
        <dbReference type="ChEBI" id="CHEBI:60344"/>
        <label>b562</label>
    </ligand>
    <ligandPart>
        <name>Fe</name>
        <dbReference type="ChEBI" id="CHEBI:18248"/>
    </ligandPart>
</feature>
<feature type="binding site" description="axial binding residue" evidence="2">
    <location>
        <position position="196"/>
    </location>
    <ligand>
        <name>heme b</name>
        <dbReference type="ChEBI" id="CHEBI:60344"/>
        <label>b566</label>
    </ligand>
    <ligandPart>
        <name>Fe</name>
        <dbReference type="ChEBI" id="CHEBI:18248"/>
    </ligandPart>
</feature>
<feature type="binding site" evidence="2">
    <location>
        <position position="201"/>
    </location>
    <ligand>
        <name>a ubiquinone</name>
        <dbReference type="ChEBI" id="CHEBI:16389"/>
    </ligand>
</feature>
<comment type="function">
    <text evidence="2">Component of the ubiquinol-cytochrome c reductase complex (complex III or cytochrome b-c1 complex) that is part of the mitochondrial respiratory chain. The b-c1 complex mediates electron transfer from ubiquinol to cytochrome c. Contributes to the generation of a proton gradient across the mitochondrial membrane that is then used for ATP synthesis.</text>
</comment>
<comment type="cofactor">
    <cofactor evidence="2">
        <name>heme b</name>
        <dbReference type="ChEBI" id="CHEBI:60344"/>
    </cofactor>
    <text evidence="2">Binds 2 heme b groups non-covalently.</text>
</comment>
<comment type="subunit">
    <text evidence="2">The cytochrome bc1 complex contains 11 subunits: 3 respiratory subunits (MT-CYB, CYC1 and UQCRFS1), 2 core proteins (UQCRC1 and UQCRC2) and 6 low-molecular weight proteins (UQCRH/QCR6, UQCRB/QCR7, UQCRQ/QCR8, UQCR10/QCR9, UQCR11/QCR10 and a cleavage product of UQCRFS1). This cytochrome bc1 complex then forms a dimer.</text>
</comment>
<comment type="subcellular location">
    <subcellularLocation>
        <location evidence="2">Mitochondrion inner membrane</location>
        <topology evidence="2">Multi-pass membrane protein</topology>
    </subcellularLocation>
</comment>
<comment type="miscellaneous">
    <text evidence="1">Heme 1 (or BL or b562) is low-potential and absorbs at about 562 nm, and heme 2 (or BH or b566) is high-potential and absorbs at about 566 nm.</text>
</comment>
<comment type="similarity">
    <text evidence="3 4">Belongs to the cytochrome b family.</text>
</comment>
<comment type="caution">
    <text evidence="2">The full-length protein contains only eight transmembrane helices, not nine as predicted by bioinformatics tools.</text>
</comment>
<dbReference type="EMBL" id="AY157033">
    <property type="protein sequence ID" value="AAO16529.1"/>
    <property type="molecule type" value="Genomic_DNA"/>
</dbReference>
<dbReference type="SMR" id="Q6YDL7"/>
<dbReference type="GO" id="GO:0005743">
    <property type="term" value="C:mitochondrial inner membrane"/>
    <property type="evidence" value="ECO:0007669"/>
    <property type="project" value="UniProtKB-SubCell"/>
</dbReference>
<dbReference type="GO" id="GO:0045275">
    <property type="term" value="C:respiratory chain complex III"/>
    <property type="evidence" value="ECO:0007669"/>
    <property type="project" value="InterPro"/>
</dbReference>
<dbReference type="GO" id="GO:0046872">
    <property type="term" value="F:metal ion binding"/>
    <property type="evidence" value="ECO:0007669"/>
    <property type="project" value="UniProtKB-KW"/>
</dbReference>
<dbReference type="GO" id="GO:0008121">
    <property type="term" value="F:ubiquinol-cytochrome-c reductase activity"/>
    <property type="evidence" value="ECO:0007669"/>
    <property type="project" value="InterPro"/>
</dbReference>
<dbReference type="GO" id="GO:0006122">
    <property type="term" value="P:mitochondrial electron transport, ubiquinol to cytochrome c"/>
    <property type="evidence" value="ECO:0007669"/>
    <property type="project" value="TreeGrafter"/>
</dbReference>
<dbReference type="CDD" id="cd00290">
    <property type="entry name" value="cytochrome_b_C"/>
    <property type="match status" value="1"/>
</dbReference>
<dbReference type="CDD" id="cd00284">
    <property type="entry name" value="Cytochrome_b_N"/>
    <property type="match status" value="1"/>
</dbReference>
<dbReference type="FunFam" id="1.20.810.10:FF:000002">
    <property type="entry name" value="Cytochrome b"/>
    <property type="match status" value="1"/>
</dbReference>
<dbReference type="Gene3D" id="1.20.810.10">
    <property type="entry name" value="Cytochrome Bc1 Complex, Chain C"/>
    <property type="match status" value="1"/>
</dbReference>
<dbReference type="InterPro" id="IPR005798">
    <property type="entry name" value="Cyt_b/b6_C"/>
</dbReference>
<dbReference type="InterPro" id="IPR036150">
    <property type="entry name" value="Cyt_b/b6_C_sf"/>
</dbReference>
<dbReference type="InterPro" id="IPR005797">
    <property type="entry name" value="Cyt_b/b6_N"/>
</dbReference>
<dbReference type="InterPro" id="IPR027387">
    <property type="entry name" value="Cytb/b6-like_sf"/>
</dbReference>
<dbReference type="InterPro" id="IPR030689">
    <property type="entry name" value="Cytochrome_b"/>
</dbReference>
<dbReference type="InterPro" id="IPR048260">
    <property type="entry name" value="Cytochrome_b_C_euk/bac"/>
</dbReference>
<dbReference type="InterPro" id="IPR048259">
    <property type="entry name" value="Cytochrome_b_N_euk/bac"/>
</dbReference>
<dbReference type="InterPro" id="IPR016174">
    <property type="entry name" value="Di-haem_cyt_TM"/>
</dbReference>
<dbReference type="PANTHER" id="PTHR19271">
    <property type="entry name" value="CYTOCHROME B"/>
    <property type="match status" value="1"/>
</dbReference>
<dbReference type="PANTHER" id="PTHR19271:SF16">
    <property type="entry name" value="CYTOCHROME B"/>
    <property type="match status" value="1"/>
</dbReference>
<dbReference type="Pfam" id="PF00032">
    <property type="entry name" value="Cytochrom_B_C"/>
    <property type="match status" value="1"/>
</dbReference>
<dbReference type="Pfam" id="PF00033">
    <property type="entry name" value="Cytochrome_B"/>
    <property type="match status" value="1"/>
</dbReference>
<dbReference type="PIRSF" id="PIRSF038885">
    <property type="entry name" value="COB"/>
    <property type="match status" value="1"/>
</dbReference>
<dbReference type="SUPFAM" id="SSF81648">
    <property type="entry name" value="a domain/subunit of cytochrome bc1 complex (Ubiquinol-cytochrome c reductase)"/>
    <property type="match status" value="1"/>
</dbReference>
<dbReference type="SUPFAM" id="SSF81342">
    <property type="entry name" value="Transmembrane di-heme cytochromes"/>
    <property type="match status" value="1"/>
</dbReference>
<dbReference type="PROSITE" id="PS51003">
    <property type="entry name" value="CYTB_CTER"/>
    <property type="match status" value="1"/>
</dbReference>
<dbReference type="PROSITE" id="PS51002">
    <property type="entry name" value="CYTB_NTER"/>
    <property type="match status" value="1"/>
</dbReference>
<sequence length="379" mass="42849">MTNIRKTHPLLKIINSSFVDLPAPSSLSSWWNFGSLLGVCLGVQILTGLFLAMHYTSDTTTAFNSVTHICRDVNYGWLLRYIHANGASMFFICLYMHVGRGLYYGSYMYSETWNIGILLLFAVMATAFMGYVLPWGQMSFWGATVITNLLSAIPYIGTDLVQWIWGGFSVDKATLTRFFAFHFLFPFIVTALVMVHLLFLHETGSNNPTGIPSDPDMIPFHPYYTIKDILGFMIMLTALSTLVLFSPDLLGDPDNYIPANPLSTPPHIKPEWYFLFAYAILRSIPNKLGGVLALIMSILILAIVPIIHMSKQRSMMFRPISQCLFWLLVAVLLTLTWIGGQPVEHPYIIIGQMASILYFLIILILMPITSLMENYLLKW</sequence>
<organism>
    <name type="scientific">Ectophylla alba</name>
    <name type="common">White bat</name>
    <name type="synonym">Honduran fruit bat</name>
    <dbReference type="NCBI Taxonomy" id="148036"/>
    <lineage>
        <taxon>Eukaryota</taxon>
        <taxon>Metazoa</taxon>
        <taxon>Chordata</taxon>
        <taxon>Craniata</taxon>
        <taxon>Vertebrata</taxon>
        <taxon>Euteleostomi</taxon>
        <taxon>Mammalia</taxon>
        <taxon>Eutheria</taxon>
        <taxon>Laurasiatheria</taxon>
        <taxon>Chiroptera</taxon>
        <taxon>Yangochiroptera</taxon>
        <taxon>Phyllostomidae</taxon>
        <taxon>Stenodermatinae</taxon>
        <taxon>Ectophylla</taxon>
    </lineage>
</organism>
<accession>Q6YDL7</accession>
<keyword id="KW-0249">Electron transport</keyword>
<keyword id="KW-0349">Heme</keyword>
<keyword id="KW-0408">Iron</keyword>
<keyword id="KW-0472">Membrane</keyword>
<keyword id="KW-0479">Metal-binding</keyword>
<keyword id="KW-0496">Mitochondrion</keyword>
<keyword id="KW-0999">Mitochondrion inner membrane</keyword>
<keyword id="KW-0679">Respiratory chain</keyword>
<keyword id="KW-0812">Transmembrane</keyword>
<keyword id="KW-1133">Transmembrane helix</keyword>
<keyword id="KW-0813">Transport</keyword>
<keyword id="KW-0830">Ubiquinone</keyword>
<gene>
    <name type="primary">MT-CYB</name>
    <name type="synonym">COB</name>
    <name type="synonym">CYTB</name>
    <name type="synonym">MTCYB</name>
</gene>
<reference key="1">
    <citation type="journal article" date="2004" name="J. Mammal.">
        <title>Systematics of Vampyressa and related genera of phyllostomid bats as determined by cytochrome-b sequences.</title>
        <authorList>
            <person name="Porter C.A."/>
            <person name="Baker R.J."/>
        </authorList>
    </citation>
    <scope>NUCLEOTIDE SEQUENCE [GENOMIC DNA]</scope>
    <source>
        <strain>Isolate TK 16395</strain>
    </source>
</reference>
<name>CYB_ECTAL</name>
<protein>
    <recommendedName>
        <fullName>Cytochrome b</fullName>
    </recommendedName>
    <alternativeName>
        <fullName>Complex III subunit 3</fullName>
    </alternativeName>
    <alternativeName>
        <fullName>Complex III subunit III</fullName>
    </alternativeName>
    <alternativeName>
        <fullName>Cytochrome b-c1 complex subunit 3</fullName>
    </alternativeName>
    <alternativeName>
        <fullName>Ubiquinol-cytochrome-c reductase complex cytochrome b subunit</fullName>
    </alternativeName>
</protein>
<proteinExistence type="inferred from homology"/>
<geneLocation type="mitochondrion"/>
<evidence type="ECO:0000250" key="1"/>
<evidence type="ECO:0000250" key="2">
    <source>
        <dbReference type="UniProtKB" id="P00157"/>
    </source>
</evidence>
<evidence type="ECO:0000255" key="3">
    <source>
        <dbReference type="PROSITE-ProRule" id="PRU00967"/>
    </source>
</evidence>
<evidence type="ECO:0000255" key="4">
    <source>
        <dbReference type="PROSITE-ProRule" id="PRU00968"/>
    </source>
</evidence>